<protein>
    <recommendedName>
        <fullName>Probable LRR receptor-like serine/threonine-protein kinase At1g05700</fullName>
        <ecNumber>2.7.11.1</ecNumber>
    </recommendedName>
</protein>
<reference key="1">
    <citation type="journal article" date="2000" name="Nature">
        <title>Sequence and analysis of chromosome 1 of the plant Arabidopsis thaliana.</title>
        <authorList>
            <person name="Theologis A."/>
            <person name="Ecker J.R."/>
            <person name="Palm C.J."/>
            <person name="Federspiel N.A."/>
            <person name="Kaul S."/>
            <person name="White O."/>
            <person name="Alonso J."/>
            <person name="Altafi H."/>
            <person name="Araujo R."/>
            <person name="Bowman C.L."/>
            <person name="Brooks S.Y."/>
            <person name="Buehler E."/>
            <person name="Chan A."/>
            <person name="Chao Q."/>
            <person name="Chen H."/>
            <person name="Cheuk R.F."/>
            <person name="Chin C.W."/>
            <person name="Chung M.K."/>
            <person name="Conn L."/>
            <person name="Conway A.B."/>
            <person name="Conway A.R."/>
            <person name="Creasy T.H."/>
            <person name="Dewar K."/>
            <person name="Dunn P."/>
            <person name="Etgu P."/>
            <person name="Feldblyum T.V."/>
            <person name="Feng J.-D."/>
            <person name="Fong B."/>
            <person name="Fujii C.Y."/>
            <person name="Gill J.E."/>
            <person name="Goldsmith A.D."/>
            <person name="Haas B."/>
            <person name="Hansen N.F."/>
            <person name="Hughes B."/>
            <person name="Huizar L."/>
            <person name="Hunter J.L."/>
            <person name="Jenkins J."/>
            <person name="Johnson-Hopson C."/>
            <person name="Khan S."/>
            <person name="Khaykin E."/>
            <person name="Kim C.J."/>
            <person name="Koo H.L."/>
            <person name="Kremenetskaia I."/>
            <person name="Kurtz D.B."/>
            <person name="Kwan A."/>
            <person name="Lam B."/>
            <person name="Langin-Hooper S."/>
            <person name="Lee A."/>
            <person name="Lee J.M."/>
            <person name="Lenz C.A."/>
            <person name="Li J.H."/>
            <person name="Li Y.-P."/>
            <person name="Lin X."/>
            <person name="Liu S.X."/>
            <person name="Liu Z.A."/>
            <person name="Luros J.S."/>
            <person name="Maiti R."/>
            <person name="Marziali A."/>
            <person name="Militscher J."/>
            <person name="Miranda M."/>
            <person name="Nguyen M."/>
            <person name="Nierman W.C."/>
            <person name="Osborne B.I."/>
            <person name="Pai G."/>
            <person name="Peterson J."/>
            <person name="Pham P.K."/>
            <person name="Rizzo M."/>
            <person name="Rooney T."/>
            <person name="Rowley D."/>
            <person name="Sakano H."/>
            <person name="Salzberg S.L."/>
            <person name="Schwartz J.R."/>
            <person name="Shinn P."/>
            <person name="Southwick A.M."/>
            <person name="Sun H."/>
            <person name="Tallon L.J."/>
            <person name="Tambunga G."/>
            <person name="Toriumi M.J."/>
            <person name="Town C.D."/>
            <person name="Utterback T."/>
            <person name="Van Aken S."/>
            <person name="Vaysberg M."/>
            <person name="Vysotskaia V.S."/>
            <person name="Walker M."/>
            <person name="Wu D."/>
            <person name="Yu G."/>
            <person name="Fraser C.M."/>
            <person name="Venter J.C."/>
            <person name="Davis R.W."/>
        </authorList>
    </citation>
    <scope>NUCLEOTIDE SEQUENCE [LARGE SCALE GENOMIC DNA]</scope>
    <source>
        <strain>cv. Columbia</strain>
    </source>
</reference>
<reference key="2">
    <citation type="journal article" date="2017" name="Plant J.">
        <title>Araport11: a complete reannotation of the Arabidopsis thaliana reference genome.</title>
        <authorList>
            <person name="Cheng C.Y."/>
            <person name="Krishnakumar V."/>
            <person name="Chan A.P."/>
            <person name="Thibaud-Nissen F."/>
            <person name="Schobel S."/>
            <person name="Town C.D."/>
        </authorList>
    </citation>
    <scope>GENOME REANNOTATION</scope>
    <source>
        <strain>cv. Columbia</strain>
    </source>
</reference>
<reference key="3">
    <citation type="journal article" date="2010" name="BMC Genomics">
        <title>Genome-wide cloning and sequence analysis of leucine-rich repeat receptor-like protein kinase genes in Arabidopsis thaliana.</title>
        <authorList>
            <person name="Gou X."/>
            <person name="He K."/>
            <person name="Yang H."/>
            <person name="Yuan T."/>
            <person name="Lin H."/>
            <person name="Clouse S.D."/>
            <person name="Li J."/>
        </authorList>
    </citation>
    <scope>NUCLEOTIDE SEQUENCE [LARGE SCALE MRNA]</scope>
    <source>
        <strain>cv. Columbia</strain>
    </source>
</reference>
<feature type="signal peptide" evidence="2">
    <location>
        <begin position="1"/>
        <end position="25"/>
    </location>
</feature>
<feature type="chain" id="PRO_0000387537" description="Probable LRR receptor-like serine/threonine-protein kinase At1g05700">
    <location>
        <begin position="26"/>
        <end position="852"/>
    </location>
</feature>
<feature type="topological domain" description="Extracellular" evidence="2">
    <location>
        <begin position="26"/>
        <end position="510"/>
    </location>
</feature>
<feature type="transmembrane region" description="Helical" evidence="2">
    <location>
        <begin position="511"/>
        <end position="531"/>
    </location>
</feature>
<feature type="topological domain" description="Cytoplasmic" evidence="2">
    <location>
        <begin position="532"/>
        <end position="852"/>
    </location>
</feature>
<feature type="repeat" description="LRR 1">
    <location>
        <begin position="410"/>
        <end position="432"/>
    </location>
</feature>
<feature type="repeat" description="LRR 2">
    <location>
        <begin position="434"/>
        <end position="457"/>
    </location>
</feature>
<feature type="repeat" description="LRR 3">
    <location>
        <begin position="458"/>
        <end position="479"/>
    </location>
</feature>
<feature type="domain" description="Protein kinase" evidence="3">
    <location>
        <begin position="570"/>
        <end position="843"/>
    </location>
</feature>
<feature type="active site" description="Proton acceptor" evidence="3 4">
    <location>
        <position position="693"/>
    </location>
</feature>
<feature type="binding site" evidence="3">
    <location>
        <begin position="576"/>
        <end position="584"/>
    </location>
    <ligand>
        <name>ATP</name>
        <dbReference type="ChEBI" id="CHEBI:30616"/>
    </ligand>
</feature>
<feature type="binding site" evidence="3">
    <location>
        <position position="597"/>
    </location>
    <ligand>
        <name>ATP</name>
        <dbReference type="ChEBI" id="CHEBI:30616"/>
    </ligand>
</feature>
<feature type="modified residue" description="Phosphothreonine" evidence="1">
    <location>
        <position position="561"/>
    </location>
</feature>
<feature type="modified residue" description="Phosphotyrosine" evidence="1">
    <location>
        <position position="642"/>
    </location>
</feature>
<feature type="modified residue" description="Phosphoserine" evidence="1">
    <location>
        <position position="697"/>
    </location>
</feature>
<feature type="modified residue" description="Phosphoserine" evidence="1">
    <location>
        <position position="727"/>
    </location>
</feature>
<feature type="modified residue" description="Phosphothreonine" evidence="1">
    <location>
        <position position="728"/>
    </location>
</feature>
<feature type="modified residue" description="Phosphothreonine" evidence="1">
    <location>
        <position position="733"/>
    </location>
</feature>
<feature type="glycosylation site" description="N-linked (GlcNAc...) asparagine" evidence="2">
    <location>
        <position position="138"/>
    </location>
</feature>
<feature type="glycosylation site" description="N-linked (GlcNAc...) asparagine" evidence="2">
    <location>
        <position position="182"/>
    </location>
</feature>
<feature type="glycosylation site" description="N-linked (GlcNAc...) asparagine" evidence="2">
    <location>
        <position position="231"/>
    </location>
</feature>
<feature type="glycosylation site" description="N-linked (GlcNAc...) asparagine" evidence="2">
    <location>
        <position position="240"/>
    </location>
</feature>
<feature type="glycosylation site" description="N-linked (GlcNAc...) asparagine" evidence="2">
    <location>
        <position position="258"/>
    </location>
</feature>
<feature type="glycosylation site" description="N-linked (GlcNAc...) asparagine" evidence="2">
    <location>
        <position position="293"/>
    </location>
</feature>
<feature type="glycosylation site" description="N-linked (GlcNAc...) asparagine" evidence="2">
    <location>
        <position position="400"/>
    </location>
</feature>
<feature type="glycosylation site" description="N-linked (GlcNAc...) asparagine" evidence="2">
    <location>
        <position position="415"/>
    </location>
</feature>
<feature type="glycosylation site" description="N-linked (GlcNAc...) asparagine" evidence="2">
    <location>
        <position position="431"/>
    </location>
</feature>
<feature type="glycosylation site" description="N-linked (GlcNAc...) asparagine" evidence="2">
    <location>
        <position position="466"/>
    </location>
</feature>
<sequence length="852" mass="94981">MEEFRFLYLIYSAAFALCLVVSVLAQDQSGFISIDCGIPSGSSYKDDTTGINYVSDSSFVETGVSKSIPFTAQRQLQNLRSFPEGSRNCYTLIPIQGKGKKYLIRASFMYGNYDGENGSPEFDLFLGGNIWDTVLLSNGSSIVSKEVVYLSQSENIFVCLGNKGKGTPFISTLELRFLGNDNTTYDSPNGALFFSRRWDLRSLMGSPVRYDDDVYDRIWIPRNFGYCREINTSLPVTSDNNSYSLSSLVMSTAMTPINTTRPITMTLENSDPNVRYFVYMHFAEVEDLSLKPNQTREFDISINGVTVAAGFSPKYLQTNTFFLNPESQSKIAFSLVRTPKSTLPPIVNALEIYVANSFSQSLTNQEDGDAVTSLKTSYKVKKNWHGDPCLPNDYIWEGLNCSYDSLTPPRITSLNLSSSGLTGHISSSFSNLTMIQELDLSNNGLTGDIPEFLSKLKFLRVLNLENNTLTGSVPSELLERSNTGSFSLRLGENPGLCTEISCRKSNSKKLVIPLVASFAALFILLLLSGVFWRIRNRRNKSVNSAPQTSPMAKSENKLLFTFADVIKMTNNFGQVLGKGGFGTVYHGFYDNLQVAVKLLSETSAQGFKEFRSEVEVLVRVHHVNLTALIGYFHEGDQMGLIYEFMANGNMADHLAGKYQHTLSWRQRLQIALDAAQGLEYLHCGCKPPIVHRDVKTSNILLNEKNRAKLADFGLSRSFHTESRSHVSTLVAGTPGYLDPLCFETNGLNEKSDIYSFGVVLLEMITGKTVIKESQTKRVHVSDWVISILRSTNDVNNVIDSKMAKDFDVNSVWKVVELALSSVSQNVSDRPNMPHIVRGLNECLQREESNKNY</sequence>
<proteinExistence type="evidence at protein level"/>
<keyword id="KW-0067">ATP-binding</keyword>
<keyword id="KW-0325">Glycoprotein</keyword>
<keyword id="KW-0418">Kinase</keyword>
<keyword id="KW-0433">Leucine-rich repeat</keyword>
<keyword id="KW-0472">Membrane</keyword>
<keyword id="KW-0547">Nucleotide-binding</keyword>
<keyword id="KW-0597">Phosphoprotein</keyword>
<keyword id="KW-0675">Receptor</keyword>
<keyword id="KW-1185">Reference proteome</keyword>
<keyword id="KW-0677">Repeat</keyword>
<keyword id="KW-0723">Serine/threonine-protein kinase</keyword>
<keyword id="KW-0732">Signal</keyword>
<keyword id="KW-0808">Transferase</keyword>
<keyword id="KW-0812">Transmembrane</keyword>
<keyword id="KW-1133">Transmembrane helix</keyword>
<comment type="catalytic activity">
    <reaction>
        <text>L-seryl-[protein] + ATP = O-phospho-L-seryl-[protein] + ADP + H(+)</text>
        <dbReference type="Rhea" id="RHEA:17989"/>
        <dbReference type="Rhea" id="RHEA-COMP:9863"/>
        <dbReference type="Rhea" id="RHEA-COMP:11604"/>
        <dbReference type="ChEBI" id="CHEBI:15378"/>
        <dbReference type="ChEBI" id="CHEBI:29999"/>
        <dbReference type="ChEBI" id="CHEBI:30616"/>
        <dbReference type="ChEBI" id="CHEBI:83421"/>
        <dbReference type="ChEBI" id="CHEBI:456216"/>
        <dbReference type="EC" id="2.7.11.1"/>
    </reaction>
</comment>
<comment type="catalytic activity">
    <reaction>
        <text>L-threonyl-[protein] + ATP = O-phospho-L-threonyl-[protein] + ADP + H(+)</text>
        <dbReference type="Rhea" id="RHEA:46608"/>
        <dbReference type="Rhea" id="RHEA-COMP:11060"/>
        <dbReference type="Rhea" id="RHEA-COMP:11605"/>
        <dbReference type="ChEBI" id="CHEBI:15378"/>
        <dbReference type="ChEBI" id="CHEBI:30013"/>
        <dbReference type="ChEBI" id="CHEBI:30616"/>
        <dbReference type="ChEBI" id="CHEBI:61977"/>
        <dbReference type="ChEBI" id="CHEBI:456216"/>
        <dbReference type="EC" id="2.7.11.1"/>
    </reaction>
</comment>
<comment type="interaction">
    <interactant intactId="EBI-16963709">
        <id>C0LGD6</id>
    </interactant>
    <interactant intactId="EBI-1238200">
        <id>Q9LZV7</id>
        <label>PXC2</label>
    </interactant>
    <organismsDiffer>false</organismsDiffer>
    <experiments>2</experiments>
</comment>
<comment type="subcellular location">
    <subcellularLocation>
        <location evidence="5">Membrane</location>
        <topology evidence="5">Single-pass type I membrane protein</topology>
    </subcellularLocation>
</comment>
<comment type="similarity">
    <text evidence="3">Belongs to the protein kinase superfamily. Ser/Thr protein kinase family.</text>
</comment>
<comment type="sequence caution" evidence="5">
    <conflict type="erroneous gene model prediction">
        <sequence resource="EMBL-CDS" id="AAD30620"/>
    </conflict>
</comment>
<organism>
    <name type="scientific">Arabidopsis thaliana</name>
    <name type="common">Mouse-ear cress</name>
    <dbReference type="NCBI Taxonomy" id="3702"/>
    <lineage>
        <taxon>Eukaryota</taxon>
        <taxon>Viridiplantae</taxon>
        <taxon>Streptophyta</taxon>
        <taxon>Embryophyta</taxon>
        <taxon>Tracheophyta</taxon>
        <taxon>Spermatophyta</taxon>
        <taxon>Magnoliopsida</taxon>
        <taxon>eudicotyledons</taxon>
        <taxon>Gunneridae</taxon>
        <taxon>Pentapetalae</taxon>
        <taxon>rosids</taxon>
        <taxon>malvids</taxon>
        <taxon>Brassicales</taxon>
        <taxon>Brassicaceae</taxon>
        <taxon>Camelineae</taxon>
        <taxon>Arabidopsis</taxon>
    </lineage>
</organism>
<name>Y1570_ARATH</name>
<accession>C0LGD6</accession>
<accession>Q9SYL1</accession>
<evidence type="ECO:0000250" key="1">
    <source>
        <dbReference type="UniProtKB" id="O48814"/>
    </source>
</evidence>
<evidence type="ECO:0000255" key="2"/>
<evidence type="ECO:0000255" key="3">
    <source>
        <dbReference type="PROSITE-ProRule" id="PRU00159"/>
    </source>
</evidence>
<evidence type="ECO:0000255" key="4">
    <source>
        <dbReference type="PROSITE-ProRule" id="PRU10027"/>
    </source>
</evidence>
<evidence type="ECO:0000305" key="5"/>
<gene>
    <name type="ordered locus">At1g05700</name>
    <name type="ORF">F3F20.15</name>
</gene>
<dbReference type="EC" id="2.7.11.1"/>
<dbReference type="EMBL" id="AC007153">
    <property type="protein sequence ID" value="AAD30620.1"/>
    <property type="status" value="ALT_SEQ"/>
    <property type="molecule type" value="Genomic_DNA"/>
</dbReference>
<dbReference type="EMBL" id="CP002684">
    <property type="protein sequence ID" value="AEE27878.1"/>
    <property type="molecule type" value="Genomic_DNA"/>
</dbReference>
<dbReference type="EMBL" id="FJ708625">
    <property type="protein sequence ID" value="ACN59221.1"/>
    <property type="molecule type" value="mRNA"/>
</dbReference>
<dbReference type="PIR" id="C86191">
    <property type="entry name" value="C86191"/>
</dbReference>
<dbReference type="RefSeq" id="NP_172061.2">
    <property type="nucleotide sequence ID" value="NM_100450.3"/>
</dbReference>
<dbReference type="SMR" id="C0LGD6"/>
<dbReference type="BioGRID" id="22319">
    <property type="interactions" value="24"/>
</dbReference>
<dbReference type="IntAct" id="C0LGD6">
    <property type="interactions" value="25"/>
</dbReference>
<dbReference type="STRING" id="3702.C0LGD6"/>
<dbReference type="GlyGen" id="C0LGD6">
    <property type="glycosylation" value="10 sites"/>
</dbReference>
<dbReference type="iPTMnet" id="C0LGD6"/>
<dbReference type="PaxDb" id="3702-AT1G05700.1"/>
<dbReference type="ProteomicsDB" id="243032"/>
<dbReference type="EnsemblPlants" id="AT1G05700.1">
    <property type="protein sequence ID" value="AT1G05700.1"/>
    <property type="gene ID" value="AT1G05700"/>
</dbReference>
<dbReference type="GeneID" id="837077"/>
<dbReference type="Gramene" id="AT1G05700.1">
    <property type="protein sequence ID" value="AT1G05700.1"/>
    <property type="gene ID" value="AT1G05700"/>
</dbReference>
<dbReference type="KEGG" id="ath:AT1G05700"/>
<dbReference type="Araport" id="AT1G05700"/>
<dbReference type="TAIR" id="AT1G05700"/>
<dbReference type="eggNOG" id="ENOG502QQCZ">
    <property type="taxonomic scope" value="Eukaryota"/>
</dbReference>
<dbReference type="HOGENOM" id="CLU_000288_41_1_1"/>
<dbReference type="InParanoid" id="C0LGD6"/>
<dbReference type="OMA" id="APRICFR"/>
<dbReference type="OrthoDB" id="2017114at2759"/>
<dbReference type="PhylomeDB" id="C0LGD6"/>
<dbReference type="PRO" id="PR:C0LGD6"/>
<dbReference type="Proteomes" id="UP000006548">
    <property type="component" value="Chromosome 1"/>
</dbReference>
<dbReference type="ExpressionAtlas" id="C0LGD6">
    <property type="expression patterns" value="baseline and differential"/>
</dbReference>
<dbReference type="GO" id="GO:0016020">
    <property type="term" value="C:membrane"/>
    <property type="evidence" value="ECO:0007669"/>
    <property type="project" value="UniProtKB-SubCell"/>
</dbReference>
<dbReference type="GO" id="GO:0005524">
    <property type="term" value="F:ATP binding"/>
    <property type="evidence" value="ECO:0007669"/>
    <property type="project" value="UniProtKB-KW"/>
</dbReference>
<dbReference type="GO" id="GO:0106310">
    <property type="term" value="F:protein serine kinase activity"/>
    <property type="evidence" value="ECO:0007669"/>
    <property type="project" value="RHEA"/>
</dbReference>
<dbReference type="GO" id="GO:0004674">
    <property type="term" value="F:protein serine/threonine kinase activity"/>
    <property type="evidence" value="ECO:0007669"/>
    <property type="project" value="UniProtKB-KW"/>
</dbReference>
<dbReference type="FunFam" id="3.80.10.10:FF:000129">
    <property type="entry name" value="Leucine-rich repeat receptor-like kinase"/>
    <property type="match status" value="1"/>
</dbReference>
<dbReference type="FunFam" id="1.10.510.10:FF:000146">
    <property type="entry name" value="LRR receptor-like serine/threonine-protein kinase IOS1"/>
    <property type="match status" value="1"/>
</dbReference>
<dbReference type="Gene3D" id="2.60.120.430">
    <property type="entry name" value="Galactose-binding lectin"/>
    <property type="match status" value="1"/>
</dbReference>
<dbReference type="Gene3D" id="3.30.200.20">
    <property type="entry name" value="Phosphorylase Kinase, domain 1"/>
    <property type="match status" value="1"/>
</dbReference>
<dbReference type="Gene3D" id="3.80.10.10">
    <property type="entry name" value="Ribonuclease Inhibitor"/>
    <property type="match status" value="1"/>
</dbReference>
<dbReference type="Gene3D" id="1.10.510.10">
    <property type="entry name" value="Transferase(Phosphotransferase) domain 1"/>
    <property type="match status" value="1"/>
</dbReference>
<dbReference type="InterPro" id="IPR011009">
    <property type="entry name" value="Kinase-like_dom_sf"/>
</dbReference>
<dbReference type="InterPro" id="IPR001611">
    <property type="entry name" value="Leu-rich_rpt"/>
</dbReference>
<dbReference type="InterPro" id="IPR025875">
    <property type="entry name" value="Leu-rich_rpt_4"/>
</dbReference>
<dbReference type="InterPro" id="IPR032675">
    <property type="entry name" value="LRR_dom_sf"/>
</dbReference>
<dbReference type="InterPro" id="IPR024788">
    <property type="entry name" value="Malectin-like_Carb-bd_dom"/>
</dbReference>
<dbReference type="InterPro" id="IPR000719">
    <property type="entry name" value="Prot_kinase_dom"/>
</dbReference>
<dbReference type="InterPro" id="IPR017441">
    <property type="entry name" value="Protein_kinase_ATP_BS"/>
</dbReference>
<dbReference type="InterPro" id="IPR008271">
    <property type="entry name" value="Ser/Thr_kinase_AS"/>
</dbReference>
<dbReference type="PANTHER" id="PTHR45631">
    <property type="entry name" value="OS07G0107800 PROTEIN-RELATED"/>
    <property type="match status" value="1"/>
</dbReference>
<dbReference type="PANTHER" id="PTHR45631:SF197">
    <property type="entry name" value="TYROSINE KINASE FAMILY PROTEIN"/>
    <property type="match status" value="1"/>
</dbReference>
<dbReference type="Pfam" id="PF00560">
    <property type="entry name" value="LRR_1"/>
    <property type="match status" value="1"/>
</dbReference>
<dbReference type="Pfam" id="PF12799">
    <property type="entry name" value="LRR_4"/>
    <property type="match status" value="1"/>
</dbReference>
<dbReference type="Pfam" id="PF12819">
    <property type="entry name" value="Malectin_like"/>
    <property type="match status" value="1"/>
</dbReference>
<dbReference type="Pfam" id="PF00069">
    <property type="entry name" value="Pkinase"/>
    <property type="match status" value="1"/>
</dbReference>
<dbReference type="SMART" id="SM00220">
    <property type="entry name" value="S_TKc"/>
    <property type="match status" value="1"/>
</dbReference>
<dbReference type="SUPFAM" id="SSF52058">
    <property type="entry name" value="L domain-like"/>
    <property type="match status" value="1"/>
</dbReference>
<dbReference type="SUPFAM" id="SSF56112">
    <property type="entry name" value="Protein kinase-like (PK-like)"/>
    <property type="match status" value="1"/>
</dbReference>
<dbReference type="PROSITE" id="PS00107">
    <property type="entry name" value="PROTEIN_KINASE_ATP"/>
    <property type="match status" value="1"/>
</dbReference>
<dbReference type="PROSITE" id="PS50011">
    <property type="entry name" value="PROTEIN_KINASE_DOM"/>
    <property type="match status" value="1"/>
</dbReference>
<dbReference type="PROSITE" id="PS00108">
    <property type="entry name" value="PROTEIN_KINASE_ST"/>
    <property type="match status" value="1"/>
</dbReference>